<gene>
    <name evidence="1" type="primary">kdsA</name>
    <name type="ordered locus">ABAYE1668</name>
</gene>
<sequence>MSQLKPQEVVRLGDIQMANHLPFVLFGGMNVLESKDLAFEIAETYIDICKRLDIPYVFKASFDKANRSSLHSFRGPGLEKGIEWLGDIKKHFNVPIITDVHEPYQAAPVAEVADIIQLPAFLSRQTDLVEAMAKTQAIINIKKAQFLAPHEMRHILHKCLEAGNDKLILCERGSAFGYNNLVVDMLGFDIMKEMNVPVFFDVTHALQTPGGRSDSAGGRRAQITTLARAGMATGLAGLFLESHPDPDKAKCDGPSALRLSQLEPFLAQLKELDTLVKGFKKLDTH</sequence>
<keyword id="KW-0963">Cytoplasm</keyword>
<keyword id="KW-0448">Lipopolysaccharide biosynthesis</keyword>
<keyword id="KW-0808">Transferase</keyword>
<comment type="catalytic activity">
    <reaction evidence="1">
        <text>D-arabinose 5-phosphate + phosphoenolpyruvate + H2O = 3-deoxy-alpha-D-manno-2-octulosonate-8-phosphate + phosphate</text>
        <dbReference type="Rhea" id="RHEA:14053"/>
        <dbReference type="ChEBI" id="CHEBI:15377"/>
        <dbReference type="ChEBI" id="CHEBI:43474"/>
        <dbReference type="ChEBI" id="CHEBI:57693"/>
        <dbReference type="ChEBI" id="CHEBI:58702"/>
        <dbReference type="ChEBI" id="CHEBI:85985"/>
        <dbReference type="EC" id="2.5.1.55"/>
    </reaction>
</comment>
<comment type="pathway">
    <text evidence="1">Carbohydrate biosynthesis; 3-deoxy-D-manno-octulosonate biosynthesis; 3-deoxy-D-manno-octulosonate from D-ribulose 5-phosphate: step 2/3.</text>
</comment>
<comment type="pathway">
    <text evidence="1">Bacterial outer membrane biogenesis; lipopolysaccharide biosynthesis.</text>
</comment>
<comment type="subcellular location">
    <subcellularLocation>
        <location evidence="1">Cytoplasm</location>
    </subcellularLocation>
</comment>
<comment type="similarity">
    <text evidence="1">Belongs to the KdsA family.</text>
</comment>
<proteinExistence type="inferred from homology"/>
<dbReference type="EC" id="2.5.1.55" evidence="1"/>
<dbReference type="EMBL" id="CU459141">
    <property type="protein sequence ID" value="CAM86560.1"/>
    <property type="molecule type" value="Genomic_DNA"/>
</dbReference>
<dbReference type="RefSeq" id="WP_000080538.1">
    <property type="nucleotide sequence ID" value="NZ_JBDGFB010000010.1"/>
</dbReference>
<dbReference type="SMR" id="B0V676"/>
<dbReference type="EnsemblBacteria" id="CAM86560">
    <property type="protein sequence ID" value="CAM86560"/>
    <property type="gene ID" value="ABAYE1668"/>
</dbReference>
<dbReference type="GeneID" id="92894150"/>
<dbReference type="KEGG" id="aby:ABAYE1668"/>
<dbReference type="HOGENOM" id="CLU_036666_0_0_6"/>
<dbReference type="UniPathway" id="UPA00030"/>
<dbReference type="UniPathway" id="UPA00357">
    <property type="reaction ID" value="UER00474"/>
</dbReference>
<dbReference type="GO" id="GO:0005737">
    <property type="term" value="C:cytoplasm"/>
    <property type="evidence" value="ECO:0007669"/>
    <property type="project" value="UniProtKB-SubCell"/>
</dbReference>
<dbReference type="GO" id="GO:0008676">
    <property type="term" value="F:3-deoxy-8-phosphooctulonate synthase activity"/>
    <property type="evidence" value="ECO:0007669"/>
    <property type="project" value="UniProtKB-UniRule"/>
</dbReference>
<dbReference type="GO" id="GO:0019294">
    <property type="term" value="P:keto-3-deoxy-D-manno-octulosonic acid biosynthetic process"/>
    <property type="evidence" value="ECO:0007669"/>
    <property type="project" value="UniProtKB-UniRule"/>
</dbReference>
<dbReference type="Gene3D" id="3.20.20.70">
    <property type="entry name" value="Aldolase class I"/>
    <property type="match status" value="1"/>
</dbReference>
<dbReference type="HAMAP" id="MF_00056">
    <property type="entry name" value="KDO8P_synth"/>
    <property type="match status" value="1"/>
</dbReference>
<dbReference type="InterPro" id="IPR013785">
    <property type="entry name" value="Aldolase_TIM"/>
</dbReference>
<dbReference type="InterPro" id="IPR006218">
    <property type="entry name" value="DAHP1/KDSA"/>
</dbReference>
<dbReference type="InterPro" id="IPR006269">
    <property type="entry name" value="KDO8P_synthase"/>
</dbReference>
<dbReference type="NCBIfam" id="TIGR01362">
    <property type="entry name" value="KDO8P_synth"/>
    <property type="match status" value="1"/>
</dbReference>
<dbReference type="NCBIfam" id="NF003543">
    <property type="entry name" value="PRK05198.1"/>
    <property type="match status" value="1"/>
</dbReference>
<dbReference type="PANTHER" id="PTHR21057">
    <property type="entry name" value="PHOSPHO-2-DEHYDRO-3-DEOXYHEPTONATE ALDOLASE"/>
    <property type="match status" value="1"/>
</dbReference>
<dbReference type="Pfam" id="PF00793">
    <property type="entry name" value="DAHP_synth_1"/>
    <property type="match status" value="1"/>
</dbReference>
<dbReference type="SUPFAM" id="SSF51569">
    <property type="entry name" value="Aldolase"/>
    <property type="match status" value="1"/>
</dbReference>
<feature type="chain" id="PRO_1000091794" description="2-dehydro-3-deoxyphosphooctonate aldolase">
    <location>
        <begin position="1"/>
        <end position="285"/>
    </location>
</feature>
<organism>
    <name type="scientific">Acinetobacter baumannii (strain AYE)</name>
    <dbReference type="NCBI Taxonomy" id="509173"/>
    <lineage>
        <taxon>Bacteria</taxon>
        <taxon>Pseudomonadati</taxon>
        <taxon>Pseudomonadota</taxon>
        <taxon>Gammaproteobacteria</taxon>
        <taxon>Moraxellales</taxon>
        <taxon>Moraxellaceae</taxon>
        <taxon>Acinetobacter</taxon>
        <taxon>Acinetobacter calcoaceticus/baumannii complex</taxon>
    </lineage>
</organism>
<protein>
    <recommendedName>
        <fullName evidence="1">2-dehydro-3-deoxyphosphooctonate aldolase</fullName>
        <ecNumber evidence="1">2.5.1.55</ecNumber>
    </recommendedName>
    <alternativeName>
        <fullName evidence="1">3-deoxy-D-manno-octulosonic acid 8-phosphate synthase</fullName>
    </alternativeName>
    <alternativeName>
        <fullName evidence="1">KDO-8-phosphate synthase</fullName>
        <shortName evidence="1">KDO 8-P synthase</shortName>
        <shortName evidence="1">KDOPS</shortName>
    </alternativeName>
    <alternativeName>
        <fullName evidence="1">Phospho-2-dehydro-3-deoxyoctonate aldolase</fullName>
    </alternativeName>
</protein>
<accession>B0V676</accession>
<evidence type="ECO:0000255" key="1">
    <source>
        <dbReference type="HAMAP-Rule" id="MF_00056"/>
    </source>
</evidence>
<name>KDSA_ACIBY</name>
<reference key="1">
    <citation type="journal article" date="2008" name="PLoS ONE">
        <title>Comparative analysis of Acinetobacters: three genomes for three lifestyles.</title>
        <authorList>
            <person name="Vallenet D."/>
            <person name="Nordmann P."/>
            <person name="Barbe V."/>
            <person name="Poirel L."/>
            <person name="Mangenot S."/>
            <person name="Bataille E."/>
            <person name="Dossat C."/>
            <person name="Gas S."/>
            <person name="Kreimeyer A."/>
            <person name="Lenoble P."/>
            <person name="Oztas S."/>
            <person name="Poulain J."/>
            <person name="Segurens B."/>
            <person name="Robert C."/>
            <person name="Abergel C."/>
            <person name="Claverie J.-M."/>
            <person name="Raoult D."/>
            <person name="Medigue C."/>
            <person name="Weissenbach J."/>
            <person name="Cruveiller S."/>
        </authorList>
    </citation>
    <scope>NUCLEOTIDE SEQUENCE [LARGE SCALE GENOMIC DNA]</scope>
    <source>
        <strain>AYE</strain>
    </source>
</reference>